<organism>
    <name type="scientific">Leuconostoc mesenteroides subsp. mesenteroides (strain ATCC 8293 / DSM 20343 / BCRC 11652 / CCM 1803 / JCM 6124 / NCDO 523 / NBRC 100496 / NCIMB 8023 / NCTC 12954 / NRRL B-1118 / 37Y)</name>
    <dbReference type="NCBI Taxonomy" id="203120"/>
    <lineage>
        <taxon>Bacteria</taxon>
        <taxon>Bacillati</taxon>
        <taxon>Bacillota</taxon>
        <taxon>Bacilli</taxon>
        <taxon>Lactobacillales</taxon>
        <taxon>Lactobacillaceae</taxon>
        <taxon>Leuconostoc</taxon>
    </lineage>
</organism>
<evidence type="ECO:0000255" key="1">
    <source>
        <dbReference type="HAMAP-Rule" id="MF_00537"/>
    </source>
</evidence>
<evidence type="ECO:0000305" key="2"/>
<feature type="chain" id="PRO_1000128435" description="Small ribosomal subunit protein uS14">
    <location>
        <begin position="1"/>
        <end position="89"/>
    </location>
</feature>
<sequence>MAKKSKIAKAQKREALVAKYADKRAALKAAGDYIGLAALPKDSSPVRVHNRDWIDGRPHAYMREFGMSRLNFRQLAHKGQIPGVRKASW</sequence>
<gene>
    <name evidence="1" type="primary">rpsN</name>
    <name type="ordered locus">LEUM_1360</name>
</gene>
<dbReference type="EMBL" id="CP000414">
    <property type="protein sequence ID" value="ABJ62453.1"/>
    <property type="molecule type" value="Genomic_DNA"/>
</dbReference>
<dbReference type="RefSeq" id="WP_002815025.1">
    <property type="nucleotide sequence ID" value="NC_008531.1"/>
</dbReference>
<dbReference type="SMR" id="Q03WG9"/>
<dbReference type="EnsemblBacteria" id="ABJ62453">
    <property type="protein sequence ID" value="ABJ62453"/>
    <property type="gene ID" value="LEUM_1360"/>
</dbReference>
<dbReference type="GeneID" id="97503668"/>
<dbReference type="KEGG" id="lme:LEUM_1360"/>
<dbReference type="eggNOG" id="COG0199">
    <property type="taxonomic scope" value="Bacteria"/>
</dbReference>
<dbReference type="HOGENOM" id="CLU_139869_0_0_9"/>
<dbReference type="Proteomes" id="UP000000362">
    <property type="component" value="Chromosome"/>
</dbReference>
<dbReference type="GO" id="GO:0005737">
    <property type="term" value="C:cytoplasm"/>
    <property type="evidence" value="ECO:0007669"/>
    <property type="project" value="UniProtKB-ARBA"/>
</dbReference>
<dbReference type="GO" id="GO:0015935">
    <property type="term" value="C:small ribosomal subunit"/>
    <property type="evidence" value="ECO:0007669"/>
    <property type="project" value="TreeGrafter"/>
</dbReference>
<dbReference type="GO" id="GO:0019843">
    <property type="term" value="F:rRNA binding"/>
    <property type="evidence" value="ECO:0007669"/>
    <property type="project" value="UniProtKB-UniRule"/>
</dbReference>
<dbReference type="GO" id="GO:0003735">
    <property type="term" value="F:structural constituent of ribosome"/>
    <property type="evidence" value="ECO:0007669"/>
    <property type="project" value="InterPro"/>
</dbReference>
<dbReference type="GO" id="GO:0006412">
    <property type="term" value="P:translation"/>
    <property type="evidence" value="ECO:0007669"/>
    <property type="project" value="UniProtKB-UniRule"/>
</dbReference>
<dbReference type="Gene3D" id="4.10.830.10">
    <property type="entry name" value="30s Ribosomal Protein S14, Chain N"/>
    <property type="match status" value="1"/>
</dbReference>
<dbReference type="HAMAP" id="MF_00537">
    <property type="entry name" value="Ribosomal_uS14_1"/>
    <property type="match status" value="1"/>
</dbReference>
<dbReference type="InterPro" id="IPR001209">
    <property type="entry name" value="Ribosomal_uS14"/>
</dbReference>
<dbReference type="InterPro" id="IPR023036">
    <property type="entry name" value="Ribosomal_uS14_bac/plastid"/>
</dbReference>
<dbReference type="InterPro" id="IPR043140">
    <property type="entry name" value="Ribosomal_uS14_sf"/>
</dbReference>
<dbReference type="NCBIfam" id="NF006477">
    <property type="entry name" value="PRK08881.1"/>
    <property type="match status" value="1"/>
</dbReference>
<dbReference type="PANTHER" id="PTHR19836">
    <property type="entry name" value="30S RIBOSOMAL PROTEIN S14"/>
    <property type="match status" value="1"/>
</dbReference>
<dbReference type="PANTHER" id="PTHR19836:SF19">
    <property type="entry name" value="SMALL RIBOSOMAL SUBUNIT PROTEIN US14M"/>
    <property type="match status" value="1"/>
</dbReference>
<dbReference type="Pfam" id="PF00253">
    <property type="entry name" value="Ribosomal_S14"/>
    <property type="match status" value="1"/>
</dbReference>
<dbReference type="SUPFAM" id="SSF57716">
    <property type="entry name" value="Glucocorticoid receptor-like (DNA-binding domain)"/>
    <property type="match status" value="1"/>
</dbReference>
<protein>
    <recommendedName>
        <fullName evidence="1">Small ribosomal subunit protein uS14</fullName>
    </recommendedName>
    <alternativeName>
        <fullName evidence="2">30S ribosomal protein S14</fullName>
    </alternativeName>
</protein>
<name>RS14_LEUMM</name>
<comment type="function">
    <text evidence="1">Binds 16S rRNA, required for the assembly of 30S particles and may also be responsible for determining the conformation of the 16S rRNA at the A site.</text>
</comment>
<comment type="subunit">
    <text evidence="1">Part of the 30S ribosomal subunit. Contacts proteins S3 and S10.</text>
</comment>
<comment type="similarity">
    <text evidence="1">Belongs to the universal ribosomal protein uS14 family.</text>
</comment>
<accession>Q03WG9</accession>
<reference key="1">
    <citation type="journal article" date="2006" name="Proc. Natl. Acad. Sci. U.S.A.">
        <title>Comparative genomics of the lactic acid bacteria.</title>
        <authorList>
            <person name="Makarova K.S."/>
            <person name="Slesarev A."/>
            <person name="Wolf Y.I."/>
            <person name="Sorokin A."/>
            <person name="Mirkin B."/>
            <person name="Koonin E.V."/>
            <person name="Pavlov A."/>
            <person name="Pavlova N."/>
            <person name="Karamychev V."/>
            <person name="Polouchine N."/>
            <person name="Shakhova V."/>
            <person name="Grigoriev I."/>
            <person name="Lou Y."/>
            <person name="Rohksar D."/>
            <person name="Lucas S."/>
            <person name="Huang K."/>
            <person name="Goodstein D.M."/>
            <person name="Hawkins T."/>
            <person name="Plengvidhya V."/>
            <person name="Welker D."/>
            <person name="Hughes J."/>
            <person name="Goh Y."/>
            <person name="Benson A."/>
            <person name="Baldwin K."/>
            <person name="Lee J.-H."/>
            <person name="Diaz-Muniz I."/>
            <person name="Dosti B."/>
            <person name="Smeianov V."/>
            <person name="Wechter W."/>
            <person name="Barabote R."/>
            <person name="Lorca G."/>
            <person name="Altermann E."/>
            <person name="Barrangou R."/>
            <person name="Ganesan B."/>
            <person name="Xie Y."/>
            <person name="Rawsthorne H."/>
            <person name="Tamir D."/>
            <person name="Parker C."/>
            <person name="Breidt F."/>
            <person name="Broadbent J.R."/>
            <person name="Hutkins R."/>
            <person name="O'Sullivan D."/>
            <person name="Steele J."/>
            <person name="Unlu G."/>
            <person name="Saier M.H. Jr."/>
            <person name="Klaenhammer T."/>
            <person name="Richardson P."/>
            <person name="Kozyavkin S."/>
            <person name="Weimer B.C."/>
            <person name="Mills D.A."/>
        </authorList>
    </citation>
    <scope>NUCLEOTIDE SEQUENCE [LARGE SCALE GENOMIC DNA]</scope>
    <source>
        <strain>ATCC 8293 / DSM 20343 / BCRC 11652 / CCM 1803 / JCM 6124 / NCDO 523 / NBRC 100496 / NCIMB 8023 / NCTC 12954 / NRRL B-1118 / 37Y</strain>
    </source>
</reference>
<keyword id="KW-1185">Reference proteome</keyword>
<keyword id="KW-0687">Ribonucleoprotein</keyword>
<keyword id="KW-0689">Ribosomal protein</keyword>
<keyword id="KW-0694">RNA-binding</keyword>
<keyword id="KW-0699">rRNA-binding</keyword>
<proteinExistence type="inferred from homology"/>